<organism>
    <name type="scientific">Cyclanthera pedata</name>
    <name type="common">Achocha</name>
    <name type="synonym">Caihua</name>
    <dbReference type="NCBI Taxonomy" id="198836"/>
    <lineage>
        <taxon>Eukaryota</taxon>
        <taxon>Viridiplantae</taxon>
        <taxon>Streptophyta</taxon>
        <taxon>Embryophyta</taxon>
        <taxon>Tracheophyta</taxon>
        <taxon>Spermatophyta</taxon>
        <taxon>Magnoliopsida</taxon>
        <taxon>eudicotyledons</taxon>
        <taxon>Gunneridae</taxon>
        <taxon>Pentapetalae</taxon>
        <taxon>rosids</taxon>
        <taxon>fabids</taxon>
        <taxon>Cucurbitales</taxon>
        <taxon>Cucurbitaceae</taxon>
        <taxon>Sicyoeae</taxon>
        <taxon>Cyclanthera</taxon>
    </lineage>
</organism>
<evidence type="ECO:0000250" key="1">
    <source>
        <dbReference type="UniProtKB" id="P01074"/>
    </source>
</evidence>
<evidence type="ECO:0000255" key="2"/>
<evidence type="ECO:0000269" key="3">
    <source>
    </source>
</evidence>
<evidence type="ECO:0000303" key="4">
    <source>
    </source>
</evidence>
<evidence type="ECO:0000305" key="5"/>
<dbReference type="SMR" id="P83396"/>
<dbReference type="GO" id="GO:0005576">
    <property type="term" value="C:extracellular region"/>
    <property type="evidence" value="ECO:0007669"/>
    <property type="project" value="UniProtKB-SubCell"/>
</dbReference>
<dbReference type="GO" id="GO:0004867">
    <property type="term" value="F:serine-type endopeptidase inhibitor activity"/>
    <property type="evidence" value="ECO:0007669"/>
    <property type="project" value="UniProtKB-KW"/>
</dbReference>
<dbReference type="CDD" id="cd00150">
    <property type="entry name" value="PlantTI"/>
    <property type="match status" value="1"/>
</dbReference>
<dbReference type="Gene3D" id="4.10.75.20">
    <property type="match status" value="1"/>
</dbReference>
<dbReference type="InterPro" id="IPR000737">
    <property type="entry name" value="Prot_inh_squash"/>
</dbReference>
<dbReference type="InterPro" id="IPR011052">
    <property type="entry name" value="Proteinase_amylase_inhib_sf"/>
</dbReference>
<dbReference type="Pfam" id="PF00299">
    <property type="entry name" value="Squash"/>
    <property type="match status" value="1"/>
</dbReference>
<dbReference type="PRINTS" id="PR00293">
    <property type="entry name" value="SQUASHINHBTR"/>
</dbReference>
<dbReference type="SMART" id="SM00286">
    <property type="entry name" value="PTI"/>
    <property type="match status" value="1"/>
</dbReference>
<dbReference type="SUPFAM" id="SSF57027">
    <property type="entry name" value="Plant inhibitors of proteinases and amylases"/>
    <property type="match status" value="1"/>
</dbReference>
<dbReference type="PROSITE" id="PS00286">
    <property type="entry name" value="SQUASH_INHIBITOR"/>
    <property type="match status" value="1"/>
</dbReference>
<sequence length="29" mass="3194">RICPRILMECKADSDCLAQCICQESGFCG</sequence>
<accession>P83396</accession>
<accession>P83393</accession>
<comment type="function">
    <text evidence="3">Strongly inhibits trypsin, weakly inhibits chymotrypsin.</text>
</comment>
<comment type="subcellular location">
    <subcellularLocation>
        <location evidence="5">Secreted</location>
    </subcellularLocation>
</comment>
<comment type="domain">
    <text evidence="1">The presence of a 'disulfide through disulfide knot' structurally defines this protein as a knottin.</text>
</comment>
<comment type="similarity">
    <text evidence="2">Belongs to the protease inhibitor I7 (squash-type serine protease inhibitor) family.</text>
</comment>
<protein>
    <recommendedName>
        <fullName evidence="4">Trypsin inhibitor 5</fullName>
    </recommendedName>
    <alternativeName>
        <fullName evidence="4">CyPTI-V</fullName>
    </alternativeName>
    <alternativeName>
        <fullName evidence="4">Trypsin inhibitor V</fullName>
    </alternativeName>
    <component>
        <recommendedName>
            <fullName evidence="4">Trypsin inhibitor 2</fullName>
        </recommendedName>
        <alternativeName>
            <fullName evidence="4">CyPTI-II</fullName>
        </alternativeName>
        <alternativeName>
            <fullName evidence="4">Trypsin inhibitor II</fullName>
        </alternativeName>
    </component>
</protein>
<keyword id="KW-0903">Direct protein sequencing</keyword>
<keyword id="KW-1015">Disulfide bond</keyword>
<keyword id="KW-0960">Knottin</keyword>
<keyword id="KW-0646">Protease inhibitor</keyword>
<keyword id="KW-0964">Secreted</keyword>
<keyword id="KW-0722">Serine protease inhibitor</keyword>
<proteinExistence type="evidence at protein level"/>
<name>ITR5_CYCPE</name>
<reference evidence="5" key="1">
    <citation type="journal article" date="2006" name="Biochim. Biophys. Acta">
        <title>Isolation and primary structures of seven serine proteinase inhibitors from Cyclanthera pedata seeds.</title>
        <authorList>
            <person name="Kowalska J."/>
            <person name="Zablocka A."/>
            <person name="Wilusz T."/>
        </authorList>
    </citation>
    <scope>PROTEIN SEQUENCE</scope>
    <scope>FUNCTION</scope>
    <scope>REACTIVE SITE</scope>
    <source>
        <tissue evidence="3">Seed</tissue>
    </source>
</reference>
<feature type="peptide" id="PRO_0000033206" description="Trypsin inhibitor 5" evidence="3">
    <location>
        <begin position="1"/>
        <end position="29"/>
    </location>
</feature>
<feature type="peptide" id="PRO_0000033207" description="Trypsin inhibitor 2" evidence="3">
    <location>
        <begin position="2"/>
        <end position="29"/>
    </location>
</feature>
<feature type="site" description="Reactive bond" evidence="3">
    <location>
        <begin position="5"/>
        <end position="6"/>
    </location>
</feature>
<feature type="disulfide bond" evidence="1">
    <location>
        <begin position="3"/>
        <end position="20"/>
    </location>
</feature>
<feature type="disulfide bond" evidence="1">
    <location>
        <begin position="10"/>
        <end position="22"/>
    </location>
</feature>
<feature type="disulfide bond" evidence="1">
    <location>
        <begin position="16"/>
        <end position="28"/>
    </location>
</feature>